<accession>A9HZ13</accession>
<protein>
    <recommendedName>
        <fullName evidence="1">Nucleoid-associated protein Bpet3552</fullName>
    </recommendedName>
</protein>
<evidence type="ECO:0000255" key="1">
    <source>
        <dbReference type="HAMAP-Rule" id="MF_00274"/>
    </source>
</evidence>
<name>Y3552_BORPD</name>
<keyword id="KW-0963">Cytoplasm</keyword>
<keyword id="KW-0238">DNA-binding</keyword>
<sequence>MMKGQLAGLMRQAQQMQENMKKAQDALAEIIVEGESGGGLVKVSMSCRHDVKRVAIDPSLLADDKDMLEDLVAAAFNDALRKVESTSQEKMASVTAGMPLPAGMKLPF</sequence>
<dbReference type="EMBL" id="AM902716">
    <property type="protein sequence ID" value="CAP43895.1"/>
    <property type="molecule type" value="Genomic_DNA"/>
</dbReference>
<dbReference type="SMR" id="A9HZ13"/>
<dbReference type="STRING" id="94624.Bpet3552"/>
<dbReference type="KEGG" id="bpt:Bpet3552"/>
<dbReference type="eggNOG" id="COG0718">
    <property type="taxonomic scope" value="Bacteria"/>
</dbReference>
<dbReference type="Proteomes" id="UP000001225">
    <property type="component" value="Chromosome"/>
</dbReference>
<dbReference type="GO" id="GO:0043590">
    <property type="term" value="C:bacterial nucleoid"/>
    <property type="evidence" value="ECO:0007669"/>
    <property type="project" value="UniProtKB-UniRule"/>
</dbReference>
<dbReference type="GO" id="GO:0005829">
    <property type="term" value="C:cytosol"/>
    <property type="evidence" value="ECO:0007669"/>
    <property type="project" value="TreeGrafter"/>
</dbReference>
<dbReference type="GO" id="GO:0003677">
    <property type="term" value="F:DNA binding"/>
    <property type="evidence" value="ECO:0007669"/>
    <property type="project" value="UniProtKB-UniRule"/>
</dbReference>
<dbReference type="FunFam" id="3.30.1310.10:FF:000001">
    <property type="entry name" value="Nucleoid-associated protein YbaB"/>
    <property type="match status" value="1"/>
</dbReference>
<dbReference type="Gene3D" id="3.30.1310.10">
    <property type="entry name" value="Nucleoid-associated protein YbaB-like domain"/>
    <property type="match status" value="1"/>
</dbReference>
<dbReference type="HAMAP" id="MF_00274">
    <property type="entry name" value="DNA_YbaB_EbfC"/>
    <property type="match status" value="1"/>
</dbReference>
<dbReference type="InterPro" id="IPR036894">
    <property type="entry name" value="YbaB-like_sf"/>
</dbReference>
<dbReference type="InterPro" id="IPR004401">
    <property type="entry name" value="YbaB/EbfC"/>
</dbReference>
<dbReference type="NCBIfam" id="TIGR00103">
    <property type="entry name" value="DNA_YbaB_EbfC"/>
    <property type="match status" value="1"/>
</dbReference>
<dbReference type="PANTHER" id="PTHR33449">
    <property type="entry name" value="NUCLEOID-ASSOCIATED PROTEIN YBAB"/>
    <property type="match status" value="1"/>
</dbReference>
<dbReference type="PANTHER" id="PTHR33449:SF1">
    <property type="entry name" value="NUCLEOID-ASSOCIATED PROTEIN YBAB"/>
    <property type="match status" value="1"/>
</dbReference>
<dbReference type="Pfam" id="PF02575">
    <property type="entry name" value="YbaB_DNA_bd"/>
    <property type="match status" value="1"/>
</dbReference>
<dbReference type="PIRSF" id="PIRSF004555">
    <property type="entry name" value="UCP004555"/>
    <property type="match status" value="1"/>
</dbReference>
<dbReference type="SUPFAM" id="SSF82607">
    <property type="entry name" value="YbaB-like"/>
    <property type="match status" value="1"/>
</dbReference>
<feature type="chain" id="PRO_1000114586" description="Nucleoid-associated protein Bpet3552">
    <location>
        <begin position="1"/>
        <end position="108"/>
    </location>
</feature>
<organism>
    <name type="scientific">Bordetella petrii (strain ATCC BAA-461 / DSM 12804 / CCUG 43448)</name>
    <dbReference type="NCBI Taxonomy" id="340100"/>
    <lineage>
        <taxon>Bacteria</taxon>
        <taxon>Pseudomonadati</taxon>
        <taxon>Pseudomonadota</taxon>
        <taxon>Betaproteobacteria</taxon>
        <taxon>Burkholderiales</taxon>
        <taxon>Alcaligenaceae</taxon>
        <taxon>Bordetella</taxon>
    </lineage>
</organism>
<proteinExistence type="inferred from homology"/>
<comment type="function">
    <text evidence="1">Binds to DNA and alters its conformation. May be involved in regulation of gene expression, nucleoid organization and DNA protection.</text>
</comment>
<comment type="subunit">
    <text evidence="1">Homodimer.</text>
</comment>
<comment type="subcellular location">
    <subcellularLocation>
        <location evidence="1">Cytoplasm</location>
        <location evidence="1">Nucleoid</location>
    </subcellularLocation>
</comment>
<comment type="similarity">
    <text evidence="1">Belongs to the YbaB/EbfC family.</text>
</comment>
<gene>
    <name type="ordered locus">Bpet3552</name>
</gene>
<reference key="1">
    <citation type="journal article" date="2008" name="BMC Genomics">
        <title>The missing link: Bordetella petrii is endowed with both the metabolic versatility of environmental bacteria and virulence traits of pathogenic Bordetellae.</title>
        <authorList>
            <person name="Gross R."/>
            <person name="Guzman C.A."/>
            <person name="Sebaihia M."/>
            <person name="Martin dos Santos V.A.P."/>
            <person name="Pieper D.H."/>
            <person name="Koebnik R."/>
            <person name="Lechner M."/>
            <person name="Bartels D."/>
            <person name="Buhrmester J."/>
            <person name="Choudhuri J.V."/>
            <person name="Ebensen T."/>
            <person name="Gaigalat L."/>
            <person name="Herrmann S."/>
            <person name="Khachane A.N."/>
            <person name="Larisch C."/>
            <person name="Link S."/>
            <person name="Linke B."/>
            <person name="Meyer F."/>
            <person name="Mormann S."/>
            <person name="Nakunst D."/>
            <person name="Rueckert C."/>
            <person name="Schneiker-Bekel S."/>
            <person name="Schulze K."/>
            <person name="Voerholter F.-J."/>
            <person name="Yevsa T."/>
            <person name="Engle J.T."/>
            <person name="Goldman W.E."/>
            <person name="Puehler A."/>
            <person name="Goebel U.B."/>
            <person name="Goesmann A."/>
            <person name="Bloecker H."/>
            <person name="Kaiser O."/>
            <person name="Martinez-Arias R."/>
        </authorList>
    </citation>
    <scope>NUCLEOTIDE SEQUENCE [LARGE SCALE GENOMIC DNA]</scope>
    <source>
        <strain>ATCC BAA-461 / DSM 12804 / CCUG 43448</strain>
    </source>
</reference>